<protein>
    <recommendedName>
        <fullName evidence="1">L-rhamnonate dehydratase</fullName>
        <shortName evidence="1">RhamD</shortName>
        <ecNumber evidence="1">4.2.1.90</ecNumber>
    </recommendedName>
</protein>
<sequence length="398" mass="44240">MGMPFIKHVRAFTVRGGGADYHDQGGGHWIDDHIATPMSKYPEYRQSRQSFGINVLGTLVVEIEASDGTVGFSVTTGGDLGCFIVEKHLARFLEGARVTDIEKMWDQMYSATLYYGRKGIVINTISGVDLALWDLLAKIRKEPVHALLGGPVRDELIFYATGARPDLARQMGFIGGKMPLHHAPAEREEGLAKNLDMIGDMRSKVGKDFWLMLDCWMSLDVEYATRLATAARNEHGLKWIEEALSPDDYWGYAELRRNVPRGMLVTTGEHEATRWGFRLLLEMGCCDIIQPDVGWCGGITELIKISNLADAHGKLVVPHGSSVYSYHFVITRQNSPFAEFLMMAPKADEVVPMFNPQLLDEPVPVNGRIKASALDAPGFGVRLNPDIALHRPYPRQAA</sequence>
<reference key="1">
    <citation type="submission" date="2006-12" db="EMBL/GenBank/DDBJ databases">
        <title>Complete sequence of chromosome 1 of Verminephrobacter eiseniae EF01-2.</title>
        <authorList>
            <person name="Copeland A."/>
            <person name="Lucas S."/>
            <person name="Lapidus A."/>
            <person name="Barry K."/>
            <person name="Detter J.C."/>
            <person name="Glavina del Rio T."/>
            <person name="Dalin E."/>
            <person name="Tice H."/>
            <person name="Pitluck S."/>
            <person name="Chertkov O."/>
            <person name="Brettin T."/>
            <person name="Bruce D."/>
            <person name="Han C."/>
            <person name="Tapia R."/>
            <person name="Gilna P."/>
            <person name="Schmutz J."/>
            <person name="Larimer F."/>
            <person name="Land M."/>
            <person name="Hauser L."/>
            <person name="Kyrpides N."/>
            <person name="Kim E."/>
            <person name="Stahl D."/>
            <person name="Richardson P."/>
        </authorList>
    </citation>
    <scope>NUCLEOTIDE SEQUENCE [LARGE SCALE GENOMIC DNA]</scope>
    <source>
        <strain>EF01-2</strain>
    </source>
</reference>
<organism>
    <name type="scientific">Verminephrobacter eiseniae (strain EF01-2)</name>
    <dbReference type="NCBI Taxonomy" id="391735"/>
    <lineage>
        <taxon>Bacteria</taxon>
        <taxon>Pseudomonadati</taxon>
        <taxon>Pseudomonadota</taxon>
        <taxon>Betaproteobacteria</taxon>
        <taxon>Burkholderiales</taxon>
        <taxon>Comamonadaceae</taxon>
        <taxon>Verminephrobacter</taxon>
    </lineage>
</organism>
<feature type="chain" id="PRO_0000351710" description="L-rhamnonate dehydratase">
    <location>
        <begin position="1"/>
        <end position="398"/>
    </location>
</feature>
<feature type="active site" description="Proton acceptor" evidence="1">
    <location>
        <position position="319"/>
    </location>
</feature>
<feature type="binding site" evidence="1">
    <location>
        <position position="22"/>
    </location>
    <ligand>
        <name>substrate</name>
    </ligand>
</feature>
<feature type="binding site" evidence="1">
    <location>
        <position position="48"/>
    </location>
    <ligand>
        <name>substrate</name>
    </ligand>
</feature>
<feature type="binding site" evidence="1">
    <location>
        <position position="214"/>
    </location>
    <ligand>
        <name>Mg(2+)</name>
        <dbReference type="ChEBI" id="CHEBI:18420"/>
    </ligand>
</feature>
<feature type="binding site" evidence="1">
    <location>
        <position position="241"/>
    </location>
    <ligand>
        <name>Mg(2+)</name>
        <dbReference type="ChEBI" id="CHEBI:18420"/>
    </ligand>
</feature>
<feature type="binding site" evidence="1">
    <location>
        <position position="269"/>
    </location>
    <ligand>
        <name>Mg(2+)</name>
        <dbReference type="ChEBI" id="CHEBI:18420"/>
    </ligand>
</feature>
<feature type="binding site" evidence="1">
    <location>
        <position position="339"/>
    </location>
    <ligand>
        <name>substrate</name>
    </ligand>
</feature>
<feature type="site" description="Increases basicity of active site His" evidence="1">
    <location>
        <position position="292"/>
    </location>
</feature>
<feature type="site" description="Transition state stabilizer" evidence="1">
    <location>
        <position position="339"/>
    </location>
</feature>
<comment type="function">
    <text evidence="1">Catalyzes the dehydration of L-rhamnonate to 2-keto-3-deoxy-L-rhamnonate (KDR).</text>
</comment>
<comment type="catalytic activity">
    <reaction evidence="1">
        <text>L-rhamnonate = 2-dehydro-3-deoxy-L-rhamnonate + H2O</text>
        <dbReference type="Rhea" id="RHEA:23080"/>
        <dbReference type="ChEBI" id="CHEBI:15377"/>
        <dbReference type="ChEBI" id="CHEBI:58118"/>
        <dbReference type="ChEBI" id="CHEBI:58371"/>
        <dbReference type="EC" id="4.2.1.90"/>
    </reaction>
</comment>
<comment type="cofactor">
    <cofactor evidence="1">
        <name>Mg(2+)</name>
        <dbReference type="ChEBI" id="CHEBI:18420"/>
    </cofactor>
    <text evidence="1">Binds 1 Mg(2+) ion per subunit.</text>
</comment>
<comment type="subunit">
    <text evidence="1">Homooctamer; tetramer of dimers.</text>
</comment>
<comment type="miscellaneous">
    <text evidence="1">Reaction proceeds via a syn dehydration.</text>
</comment>
<comment type="similarity">
    <text evidence="1">Belongs to the mandelate racemase/muconate lactonizing enzyme family. RhamD subfamily.</text>
</comment>
<comment type="sequence caution" evidence="2">
    <conflict type="erroneous initiation">
        <sequence resource="EMBL-CDS" id="ABM56419"/>
    </conflict>
</comment>
<name>RHMD_VEREI</name>
<evidence type="ECO:0000255" key="1">
    <source>
        <dbReference type="HAMAP-Rule" id="MF_01288"/>
    </source>
</evidence>
<evidence type="ECO:0000305" key="2"/>
<dbReference type="EC" id="4.2.1.90" evidence="1"/>
<dbReference type="EMBL" id="CP000542">
    <property type="protein sequence ID" value="ABM56419.1"/>
    <property type="status" value="ALT_INIT"/>
    <property type="molecule type" value="Genomic_DNA"/>
</dbReference>
<dbReference type="RefSeq" id="WP_041950468.1">
    <property type="nucleotide sequence ID" value="NC_008786.1"/>
</dbReference>
<dbReference type="SMR" id="A1WFL2"/>
<dbReference type="STRING" id="391735.Veis_0636"/>
<dbReference type="GeneID" id="76459338"/>
<dbReference type="KEGG" id="vei:Veis_0636"/>
<dbReference type="eggNOG" id="COG4948">
    <property type="taxonomic scope" value="Bacteria"/>
</dbReference>
<dbReference type="HOGENOM" id="CLU_030273_1_0_4"/>
<dbReference type="OrthoDB" id="8609034at2"/>
<dbReference type="Proteomes" id="UP000000374">
    <property type="component" value="Chromosome"/>
</dbReference>
<dbReference type="GO" id="GO:0050032">
    <property type="term" value="F:L-rhamnonate dehydratase activity"/>
    <property type="evidence" value="ECO:0007669"/>
    <property type="project" value="UniProtKB-UniRule"/>
</dbReference>
<dbReference type="GO" id="GO:0000287">
    <property type="term" value="F:magnesium ion binding"/>
    <property type="evidence" value="ECO:0007669"/>
    <property type="project" value="UniProtKB-UniRule"/>
</dbReference>
<dbReference type="GO" id="GO:0009063">
    <property type="term" value="P:amino acid catabolic process"/>
    <property type="evidence" value="ECO:0007669"/>
    <property type="project" value="InterPro"/>
</dbReference>
<dbReference type="GO" id="GO:0016052">
    <property type="term" value="P:carbohydrate catabolic process"/>
    <property type="evidence" value="ECO:0007669"/>
    <property type="project" value="TreeGrafter"/>
</dbReference>
<dbReference type="FunFam" id="3.20.20.120:FF:000005">
    <property type="entry name" value="Putative L-rhamnonate dehydratase"/>
    <property type="match status" value="1"/>
</dbReference>
<dbReference type="Gene3D" id="3.20.20.120">
    <property type="entry name" value="Enolase-like C-terminal domain"/>
    <property type="match status" value="1"/>
</dbReference>
<dbReference type="Gene3D" id="3.30.390.10">
    <property type="entry name" value="Enolase-like, N-terminal domain"/>
    <property type="match status" value="1"/>
</dbReference>
<dbReference type="HAMAP" id="MF_01288">
    <property type="entry name" value="Rhamnon_dehydrat"/>
    <property type="match status" value="1"/>
</dbReference>
<dbReference type="InterPro" id="IPR036849">
    <property type="entry name" value="Enolase-like_C_sf"/>
</dbReference>
<dbReference type="InterPro" id="IPR029017">
    <property type="entry name" value="Enolase-like_N"/>
</dbReference>
<dbReference type="InterPro" id="IPR029065">
    <property type="entry name" value="Enolase_C-like"/>
</dbReference>
<dbReference type="InterPro" id="IPR023444">
    <property type="entry name" value="L-Rhamnon_dehydrat"/>
</dbReference>
<dbReference type="InterPro" id="IPR018110">
    <property type="entry name" value="Mandel_Rmase/mucon_lact_enz_CS"/>
</dbReference>
<dbReference type="InterPro" id="IPR013342">
    <property type="entry name" value="Mandelate_racemase_C"/>
</dbReference>
<dbReference type="InterPro" id="IPR013341">
    <property type="entry name" value="Mandelate_racemase_N_dom"/>
</dbReference>
<dbReference type="InterPro" id="IPR046945">
    <property type="entry name" value="RHMD-like"/>
</dbReference>
<dbReference type="NCBIfam" id="NF011968">
    <property type="entry name" value="PRK15440.1"/>
    <property type="match status" value="1"/>
</dbReference>
<dbReference type="PANTHER" id="PTHR13794">
    <property type="entry name" value="ENOLASE SUPERFAMILY, MANDELATE RACEMASE"/>
    <property type="match status" value="1"/>
</dbReference>
<dbReference type="PANTHER" id="PTHR13794:SF58">
    <property type="entry name" value="MITOCHONDRIAL ENOLASE SUPERFAMILY MEMBER 1"/>
    <property type="match status" value="1"/>
</dbReference>
<dbReference type="Pfam" id="PF13378">
    <property type="entry name" value="MR_MLE_C"/>
    <property type="match status" value="1"/>
</dbReference>
<dbReference type="Pfam" id="PF02746">
    <property type="entry name" value="MR_MLE_N"/>
    <property type="match status" value="1"/>
</dbReference>
<dbReference type="SFLD" id="SFLDG00179">
    <property type="entry name" value="mandelate_racemase"/>
    <property type="match status" value="1"/>
</dbReference>
<dbReference type="SFLD" id="SFLDF00006">
    <property type="entry name" value="rhamnonate_dehydratase"/>
    <property type="match status" value="1"/>
</dbReference>
<dbReference type="SMART" id="SM00922">
    <property type="entry name" value="MR_MLE"/>
    <property type="match status" value="1"/>
</dbReference>
<dbReference type="SUPFAM" id="SSF51604">
    <property type="entry name" value="Enolase C-terminal domain-like"/>
    <property type="match status" value="1"/>
</dbReference>
<dbReference type="SUPFAM" id="SSF54826">
    <property type="entry name" value="Enolase N-terminal domain-like"/>
    <property type="match status" value="1"/>
</dbReference>
<dbReference type="PROSITE" id="PS00908">
    <property type="entry name" value="MR_MLE_1"/>
    <property type="match status" value="1"/>
</dbReference>
<accession>A1WFL2</accession>
<keyword id="KW-0456">Lyase</keyword>
<keyword id="KW-0460">Magnesium</keyword>
<keyword id="KW-0479">Metal-binding</keyword>
<keyword id="KW-1185">Reference proteome</keyword>
<gene>
    <name evidence="1" type="primary">rhmD</name>
    <name type="ordered locus">Veis_0636</name>
</gene>
<proteinExistence type="inferred from homology"/>